<proteinExistence type="inferred from homology"/>
<comment type="function">
    <text evidence="1">RNA chaperone that binds small regulatory RNA (sRNAs) and mRNAs to facilitate mRNA translational regulation in response to envelope stress, environmental stress and changes in metabolite concentrations. Also binds with high specificity to tRNAs.</text>
</comment>
<comment type="subunit">
    <text evidence="1">Homohexamer.</text>
</comment>
<comment type="similarity">
    <text evidence="1">Belongs to the Hfq family.</text>
</comment>
<keyword id="KW-0694">RNA-binding</keyword>
<keyword id="KW-0346">Stress response</keyword>
<sequence length="89" mass="10124">MENKKVAKALPIQDPYLNALRKEKINVAIYLVNGVKLQGRVDSFDQFVVLLRSNVTQMVYKHAISTIVPARDPKAYEFEAQETEAKDSE</sequence>
<protein>
    <recommendedName>
        <fullName evidence="1">RNA-binding protein Hfq</fullName>
    </recommendedName>
</protein>
<evidence type="ECO:0000255" key="1">
    <source>
        <dbReference type="HAMAP-Rule" id="MF_00436"/>
    </source>
</evidence>
<evidence type="ECO:0000255" key="2">
    <source>
        <dbReference type="PROSITE-ProRule" id="PRU01346"/>
    </source>
</evidence>
<dbReference type="EMBL" id="CP000109">
    <property type="protein sequence ID" value="ABB41681.1"/>
    <property type="molecule type" value="Genomic_DNA"/>
</dbReference>
<dbReference type="SMR" id="Q31GP2"/>
<dbReference type="STRING" id="317025.Tcr_1086"/>
<dbReference type="KEGG" id="tcx:Tcr_1086"/>
<dbReference type="eggNOG" id="COG1923">
    <property type="taxonomic scope" value="Bacteria"/>
</dbReference>
<dbReference type="HOGENOM" id="CLU_113688_2_2_6"/>
<dbReference type="GO" id="GO:0005829">
    <property type="term" value="C:cytosol"/>
    <property type="evidence" value="ECO:0007669"/>
    <property type="project" value="TreeGrafter"/>
</dbReference>
<dbReference type="GO" id="GO:0003723">
    <property type="term" value="F:RNA binding"/>
    <property type="evidence" value="ECO:0007669"/>
    <property type="project" value="UniProtKB-UniRule"/>
</dbReference>
<dbReference type="GO" id="GO:0006355">
    <property type="term" value="P:regulation of DNA-templated transcription"/>
    <property type="evidence" value="ECO:0007669"/>
    <property type="project" value="InterPro"/>
</dbReference>
<dbReference type="GO" id="GO:0043487">
    <property type="term" value="P:regulation of RNA stability"/>
    <property type="evidence" value="ECO:0007669"/>
    <property type="project" value="TreeGrafter"/>
</dbReference>
<dbReference type="GO" id="GO:0045974">
    <property type="term" value="P:regulation of translation, ncRNA-mediated"/>
    <property type="evidence" value="ECO:0007669"/>
    <property type="project" value="TreeGrafter"/>
</dbReference>
<dbReference type="CDD" id="cd01716">
    <property type="entry name" value="Hfq"/>
    <property type="match status" value="1"/>
</dbReference>
<dbReference type="Gene3D" id="2.30.30.100">
    <property type="match status" value="1"/>
</dbReference>
<dbReference type="HAMAP" id="MF_00436">
    <property type="entry name" value="Hfq"/>
    <property type="match status" value="1"/>
</dbReference>
<dbReference type="InterPro" id="IPR005001">
    <property type="entry name" value="Hfq"/>
</dbReference>
<dbReference type="InterPro" id="IPR010920">
    <property type="entry name" value="LSM_dom_sf"/>
</dbReference>
<dbReference type="InterPro" id="IPR047575">
    <property type="entry name" value="Sm"/>
</dbReference>
<dbReference type="NCBIfam" id="TIGR02383">
    <property type="entry name" value="Hfq"/>
    <property type="match status" value="1"/>
</dbReference>
<dbReference type="NCBIfam" id="NF001602">
    <property type="entry name" value="PRK00395.1"/>
    <property type="match status" value="1"/>
</dbReference>
<dbReference type="PANTHER" id="PTHR34772">
    <property type="entry name" value="RNA-BINDING PROTEIN HFQ"/>
    <property type="match status" value="1"/>
</dbReference>
<dbReference type="PANTHER" id="PTHR34772:SF1">
    <property type="entry name" value="RNA-BINDING PROTEIN HFQ"/>
    <property type="match status" value="1"/>
</dbReference>
<dbReference type="Pfam" id="PF17209">
    <property type="entry name" value="Hfq"/>
    <property type="match status" value="1"/>
</dbReference>
<dbReference type="SUPFAM" id="SSF50182">
    <property type="entry name" value="Sm-like ribonucleoproteins"/>
    <property type="match status" value="1"/>
</dbReference>
<dbReference type="PROSITE" id="PS52002">
    <property type="entry name" value="SM"/>
    <property type="match status" value="1"/>
</dbReference>
<gene>
    <name evidence="1" type="primary">hfq</name>
    <name type="ordered locus">Tcr_1086</name>
</gene>
<reference key="1">
    <citation type="journal article" date="2006" name="PLoS Biol.">
        <title>The genome of deep-sea vent chemolithoautotroph Thiomicrospira crunogena XCL-2.</title>
        <authorList>
            <person name="Scott K.M."/>
            <person name="Sievert S.M."/>
            <person name="Abril F.N."/>
            <person name="Ball L.A."/>
            <person name="Barrett C.J."/>
            <person name="Blake R.A."/>
            <person name="Boller A.J."/>
            <person name="Chain P.S.G."/>
            <person name="Clark J.A."/>
            <person name="Davis C.R."/>
            <person name="Detter C."/>
            <person name="Do K.F."/>
            <person name="Dobrinski K.P."/>
            <person name="Faza B.I."/>
            <person name="Fitzpatrick K.A."/>
            <person name="Freyermuth S.K."/>
            <person name="Harmer T.L."/>
            <person name="Hauser L.J."/>
            <person name="Huegler M."/>
            <person name="Kerfeld C.A."/>
            <person name="Klotz M.G."/>
            <person name="Kong W.W."/>
            <person name="Land M."/>
            <person name="Lapidus A."/>
            <person name="Larimer F.W."/>
            <person name="Longo D.L."/>
            <person name="Lucas S."/>
            <person name="Malfatti S.A."/>
            <person name="Massey S.E."/>
            <person name="Martin D.D."/>
            <person name="McCuddin Z."/>
            <person name="Meyer F."/>
            <person name="Moore J.L."/>
            <person name="Ocampo L.H. Jr."/>
            <person name="Paul J.H."/>
            <person name="Paulsen I.T."/>
            <person name="Reep D.K."/>
            <person name="Ren Q."/>
            <person name="Ross R.L."/>
            <person name="Sato P.Y."/>
            <person name="Thomas P."/>
            <person name="Tinkham L.E."/>
            <person name="Zeruth G.T."/>
        </authorList>
    </citation>
    <scope>NUCLEOTIDE SEQUENCE [LARGE SCALE GENOMIC DNA]</scope>
    <source>
        <strain>DSM 25203 / XCL-2</strain>
    </source>
</reference>
<accession>Q31GP2</accession>
<organism>
    <name type="scientific">Hydrogenovibrio crunogenus (strain DSM 25203 / XCL-2)</name>
    <name type="common">Thiomicrospira crunogena</name>
    <dbReference type="NCBI Taxonomy" id="317025"/>
    <lineage>
        <taxon>Bacteria</taxon>
        <taxon>Pseudomonadati</taxon>
        <taxon>Pseudomonadota</taxon>
        <taxon>Gammaproteobacteria</taxon>
        <taxon>Thiotrichales</taxon>
        <taxon>Piscirickettsiaceae</taxon>
        <taxon>Hydrogenovibrio</taxon>
    </lineage>
</organism>
<feature type="chain" id="PRO_0000265199" description="RNA-binding protein Hfq">
    <location>
        <begin position="1"/>
        <end position="89"/>
    </location>
</feature>
<feature type="domain" description="Sm" evidence="2">
    <location>
        <begin position="14"/>
        <end position="73"/>
    </location>
</feature>
<name>HFQ_HYDCU</name>